<accession>Q1CT35</accession>
<organism>
    <name type="scientific">Helicobacter pylori (strain HPAG1)</name>
    <dbReference type="NCBI Taxonomy" id="357544"/>
    <lineage>
        <taxon>Bacteria</taxon>
        <taxon>Pseudomonadati</taxon>
        <taxon>Campylobacterota</taxon>
        <taxon>Epsilonproteobacteria</taxon>
        <taxon>Campylobacterales</taxon>
        <taxon>Helicobacteraceae</taxon>
        <taxon>Helicobacter</taxon>
    </lineage>
</organism>
<gene>
    <name evidence="1" type="primary">der</name>
    <name type="synonym">engA</name>
    <name type="ordered locus">HPAG1_0820</name>
</gene>
<name>DER_HELPH</name>
<reference key="1">
    <citation type="journal article" date="2006" name="Proc. Natl. Acad. Sci. U.S.A.">
        <title>The complete genome sequence of a chronic atrophic gastritis Helicobacter pylori strain: evolution during disease progression.</title>
        <authorList>
            <person name="Oh J.D."/>
            <person name="Kling-Baeckhed H."/>
            <person name="Giannakis M."/>
            <person name="Xu J."/>
            <person name="Fulton R.S."/>
            <person name="Fulton L.A."/>
            <person name="Cordum H.S."/>
            <person name="Wang C."/>
            <person name="Elliott G."/>
            <person name="Edwards J."/>
            <person name="Mardis E.R."/>
            <person name="Engstrand L.G."/>
            <person name="Gordon J.I."/>
        </authorList>
    </citation>
    <scope>NUCLEOTIDE SEQUENCE [LARGE SCALE GENOMIC DNA]</scope>
    <source>
        <strain>HPAG1</strain>
    </source>
</reference>
<protein>
    <recommendedName>
        <fullName evidence="1">GTPase Der</fullName>
    </recommendedName>
    <alternativeName>
        <fullName evidence="1">GTP-binding protein EngA</fullName>
    </alternativeName>
</protein>
<sequence length="461" mass="51743">MNTSHKTLKTIAILGQPNVGKSSLFNRLARERIAITSDFAGTTRDINKRKIALNGYEVELLDTGGMAKDALLSKEIKALNLKAAQMSDLILYVVDGKSIPSDEDIKLFREVFKINPNCFLVINKIDNDKEKERAYAFSSFGMPKSFNISVSHNRGISALIDAVLSALNLNKIIEQDLDADILESLENNALEEETKEEEIIQVGIIGRVNVGKSSLLNALTKKERSLVSSVAGTTIDPIDETILIGDQKICFVDTAGIRHRSKILGIEKYALERTQKALEKSHIALLVLDVSAPFVELDEKISSLADKHSLGIILILNKWDIRYAPYEEIMETLKRKFRFLEYAPVITTSCLKARHIDEIKHKIIEVYECFSKRIPTSLLNSVISQATQKHPLPSDGGKLVKVYYATQFATKPPQISLIMNRPKALHFSYKRYLINTLRKEFNFLGTPLILNAKDKKSAQQN</sequence>
<evidence type="ECO:0000255" key="1">
    <source>
        <dbReference type="HAMAP-Rule" id="MF_00195"/>
    </source>
</evidence>
<feature type="chain" id="PRO_1000011637" description="GTPase Der">
    <location>
        <begin position="1"/>
        <end position="461"/>
    </location>
</feature>
<feature type="domain" description="EngA-type G 1">
    <location>
        <begin position="9"/>
        <end position="171"/>
    </location>
</feature>
<feature type="domain" description="EngA-type G 2">
    <location>
        <begin position="200"/>
        <end position="371"/>
    </location>
</feature>
<feature type="domain" description="KH-like" evidence="1">
    <location>
        <begin position="372"/>
        <end position="456"/>
    </location>
</feature>
<feature type="binding site" evidence="1">
    <location>
        <begin position="15"/>
        <end position="22"/>
    </location>
    <ligand>
        <name>GTP</name>
        <dbReference type="ChEBI" id="CHEBI:37565"/>
        <label>1</label>
    </ligand>
</feature>
<feature type="binding site" evidence="1">
    <location>
        <begin position="62"/>
        <end position="66"/>
    </location>
    <ligand>
        <name>GTP</name>
        <dbReference type="ChEBI" id="CHEBI:37565"/>
        <label>1</label>
    </ligand>
</feature>
<feature type="binding site" evidence="1">
    <location>
        <begin position="123"/>
        <end position="126"/>
    </location>
    <ligand>
        <name>GTP</name>
        <dbReference type="ChEBI" id="CHEBI:37565"/>
        <label>1</label>
    </ligand>
</feature>
<feature type="binding site" evidence="1">
    <location>
        <begin position="206"/>
        <end position="213"/>
    </location>
    <ligand>
        <name>GTP</name>
        <dbReference type="ChEBI" id="CHEBI:37565"/>
        <label>2</label>
    </ligand>
</feature>
<feature type="binding site" evidence="1">
    <location>
        <begin position="253"/>
        <end position="257"/>
    </location>
    <ligand>
        <name>GTP</name>
        <dbReference type="ChEBI" id="CHEBI:37565"/>
        <label>2</label>
    </ligand>
</feature>
<feature type="binding site" evidence="1">
    <location>
        <begin position="317"/>
        <end position="320"/>
    </location>
    <ligand>
        <name>GTP</name>
        <dbReference type="ChEBI" id="CHEBI:37565"/>
        <label>2</label>
    </ligand>
</feature>
<keyword id="KW-0342">GTP-binding</keyword>
<keyword id="KW-0547">Nucleotide-binding</keyword>
<keyword id="KW-0677">Repeat</keyword>
<keyword id="KW-0690">Ribosome biogenesis</keyword>
<dbReference type="EMBL" id="CP000241">
    <property type="protein sequence ID" value="ABF84887.1"/>
    <property type="molecule type" value="Genomic_DNA"/>
</dbReference>
<dbReference type="RefSeq" id="WP_001097868.1">
    <property type="nucleotide sequence ID" value="NC_008086.1"/>
</dbReference>
<dbReference type="SMR" id="Q1CT35"/>
<dbReference type="KEGG" id="hpa:HPAG1_0820"/>
<dbReference type="HOGENOM" id="CLU_016077_6_2_7"/>
<dbReference type="GO" id="GO:0005525">
    <property type="term" value="F:GTP binding"/>
    <property type="evidence" value="ECO:0007669"/>
    <property type="project" value="UniProtKB-UniRule"/>
</dbReference>
<dbReference type="GO" id="GO:0043022">
    <property type="term" value="F:ribosome binding"/>
    <property type="evidence" value="ECO:0007669"/>
    <property type="project" value="TreeGrafter"/>
</dbReference>
<dbReference type="GO" id="GO:0042254">
    <property type="term" value="P:ribosome biogenesis"/>
    <property type="evidence" value="ECO:0007669"/>
    <property type="project" value="UniProtKB-KW"/>
</dbReference>
<dbReference type="CDD" id="cd01894">
    <property type="entry name" value="EngA1"/>
    <property type="match status" value="1"/>
</dbReference>
<dbReference type="CDD" id="cd01895">
    <property type="entry name" value="EngA2"/>
    <property type="match status" value="1"/>
</dbReference>
<dbReference type="FunFam" id="3.30.300.20:FF:000004">
    <property type="entry name" value="GTPase Der"/>
    <property type="match status" value="1"/>
</dbReference>
<dbReference type="FunFam" id="3.40.50.300:FF:002598">
    <property type="entry name" value="GTPase Der"/>
    <property type="match status" value="1"/>
</dbReference>
<dbReference type="FunFam" id="3.40.50.300:FF:000494">
    <property type="entry name" value="tRNA modification GTPase MnmE"/>
    <property type="match status" value="1"/>
</dbReference>
<dbReference type="Gene3D" id="3.30.300.20">
    <property type="match status" value="1"/>
</dbReference>
<dbReference type="Gene3D" id="3.40.50.300">
    <property type="entry name" value="P-loop containing nucleotide triphosphate hydrolases"/>
    <property type="match status" value="2"/>
</dbReference>
<dbReference type="HAMAP" id="MF_00195">
    <property type="entry name" value="GTPase_Der"/>
    <property type="match status" value="1"/>
</dbReference>
<dbReference type="InterPro" id="IPR031166">
    <property type="entry name" value="G_ENGA"/>
</dbReference>
<dbReference type="InterPro" id="IPR006073">
    <property type="entry name" value="GTP-bd"/>
</dbReference>
<dbReference type="InterPro" id="IPR016484">
    <property type="entry name" value="GTPase_Der"/>
</dbReference>
<dbReference type="InterPro" id="IPR032859">
    <property type="entry name" value="KH_dom-like"/>
</dbReference>
<dbReference type="InterPro" id="IPR015946">
    <property type="entry name" value="KH_dom-like_a/b"/>
</dbReference>
<dbReference type="InterPro" id="IPR027417">
    <property type="entry name" value="P-loop_NTPase"/>
</dbReference>
<dbReference type="InterPro" id="IPR005225">
    <property type="entry name" value="Small_GTP-bd"/>
</dbReference>
<dbReference type="NCBIfam" id="TIGR03594">
    <property type="entry name" value="GTPase_EngA"/>
    <property type="match status" value="1"/>
</dbReference>
<dbReference type="NCBIfam" id="TIGR00231">
    <property type="entry name" value="small_GTP"/>
    <property type="match status" value="2"/>
</dbReference>
<dbReference type="PANTHER" id="PTHR43834">
    <property type="entry name" value="GTPASE DER"/>
    <property type="match status" value="1"/>
</dbReference>
<dbReference type="PANTHER" id="PTHR43834:SF6">
    <property type="entry name" value="GTPASE DER"/>
    <property type="match status" value="1"/>
</dbReference>
<dbReference type="Pfam" id="PF14714">
    <property type="entry name" value="KH_dom-like"/>
    <property type="match status" value="1"/>
</dbReference>
<dbReference type="Pfam" id="PF01926">
    <property type="entry name" value="MMR_HSR1"/>
    <property type="match status" value="2"/>
</dbReference>
<dbReference type="PIRSF" id="PIRSF006485">
    <property type="entry name" value="GTP-binding_EngA"/>
    <property type="match status" value="1"/>
</dbReference>
<dbReference type="PRINTS" id="PR00326">
    <property type="entry name" value="GTP1OBG"/>
</dbReference>
<dbReference type="SUPFAM" id="SSF52540">
    <property type="entry name" value="P-loop containing nucleoside triphosphate hydrolases"/>
    <property type="match status" value="2"/>
</dbReference>
<dbReference type="PROSITE" id="PS51712">
    <property type="entry name" value="G_ENGA"/>
    <property type="match status" value="2"/>
</dbReference>
<proteinExistence type="inferred from homology"/>
<comment type="function">
    <text evidence="1">GTPase that plays an essential role in the late steps of ribosome biogenesis.</text>
</comment>
<comment type="subunit">
    <text evidence="1">Associates with the 50S ribosomal subunit.</text>
</comment>
<comment type="similarity">
    <text evidence="1">Belongs to the TRAFAC class TrmE-Era-EngA-EngB-Septin-like GTPase superfamily. EngA (Der) GTPase family.</text>
</comment>